<proteinExistence type="inferred from homology"/>
<gene>
    <name evidence="1" type="primary">rplP</name>
    <name type="ordered locus">TWT_547</name>
</gene>
<organism>
    <name type="scientific">Tropheryma whipplei (strain Twist)</name>
    <name type="common">Whipple's bacillus</name>
    <dbReference type="NCBI Taxonomy" id="203267"/>
    <lineage>
        <taxon>Bacteria</taxon>
        <taxon>Bacillati</taxon>
        <taxon>Actinomycetota</taxon>
        <taxon>Actinomycetes</taxon>
        <taxon>Micrococcales</taxon>
        <taxon>Tropherymataceae</taxon>
        <taxon>Tropheryma</taxon>
    </lineage>
</organism>
<name>RL16_TROWT</name>
<evidence type="ECO:0000255" key="1">
    <source>
        <dbReference type="HAMAP-Rule" id="MF_01342"/>
    </source>
</evidence>
<evidence type="ECO:0000305" key="2"/>
<protein>
    <recommendedName>
        <fullName evidence="1">Large ribosomal subunit protein uL16</fullName>
    </recommendedName>
    <alternativeName>
        <fullName evidence="2">50S ribosomal protein L16</fullName>
    </alternativeName>
</protein>
<accession>Q83FZ3</accession>
<sequence>MMLIPKKVKFRKQHRPNRKGMSGCGTRIVFGDYGIQALSRAYVTNRQVESARIAMTRHIRRGGRVWINIYPDRPLTKKPAETRMGSGKGSPEYWVANIRPGRIMFEVSGVSESLAKEALMRAIHKLPLRARIVERQEFDDAGL</sequence>
<keyword id="KW-1185">Reference proteome</keyword>
<keyword id="KW-0687">Ribonucleoprotein</keyword>
<keyword id="KW-0689">Ribosomal protein</keyword>
<keyword id="KW-0694">RNA-binding</keyword>
<keyword id="KW-0699">rRNA-binding</keyword>
<keyword id="KW-0820">tRNA-binding</keyword>
<comment type="function">
    <text evidence="1">Binds 23S rRNA and is also seen to make contacts with the A and possibly P site tRNAs.</text>
</comment>
<comment type="subunit">
    <text evidence="1">Part of the 50S ribosomal subunit.</text>
</comment>
<comment type="similarity">
    <text evidence="1">Belongs to the universal ribosomal protein uL16 family.</text>
</comment>
<dbReference type="EMBL" id="AE014184">
    <property type="protein sequence ID" value="AAO44644.1"/>
    <property type="molecule type" value="Genomic_DNA"/>
</dbReference>
<dbReference type="SMR" id="Q83FZ3"/>
<dbReference type="STRING" id="203267.TWT_547"/>
<dbReference type="KEGG" id="twh:TWT_547"/>
<dbReference type="eggNOG" id="COG0197">
    <property type="taxonomic scope" value="Bacteria"/>
</dbReference>
<dbReference type="HOGENOM" id="CLU_078858_2_1_11"/>
<dbReference type="Proteomes" id="UP000002200">
    <property type="component" value="Chromosome"/>
</dbReference>
<dbReference type="GO" id="GO:0022625">
    <property type="term" value="C:cytosolic large ribosomal subunit"/>
    <property type="evidence" value="ECO:0007669"/>
    <property type="project" value="TreeGrafter"/>
</dbReference>
<dbReference type="GO" id="GO:0019843">
    <property type="term" value="F:rRNA binding"/>
    <property type="evidence" value="ECO:0007669"/>
    <property type="project" value="UniProtKB-UniRule"/>
</dbReference>
<dbReference type="GO" id="GO:0003735">
    <property type="term" value="F:structural constituent of ribosome"/>
    <property type="evidence" value="ECO:0007669"/>
    <property type="project" value="InterPro"/>
</dbReference>
<dbReference type="GO" id="GO:0000049">
    <property type="term" value="F:tRNA binding"/>
    <property type="evidence" value="ECO:0007669"/>
    <property type="project" value="UniProtKB-KW"/>
</dbReference>
<dbReference type="GO" id="GO:0006412">
    <property type="term" value="P:translation"/>
    <property type="evidence" value="ECO:0007669"/>
    <property type="project" value="UniProtKB-UniRule"/>
</dbReference>
<dbReference type="CDD" id="cd01433">
    <property type="entry name" value="Ribosomal_L16_L10e"/>
    <property type="match status" value="1"/>
</dbReference>
<dbReference type="FunFam" id="3.90.1170.10:FF:000001">
    <property type="entry name" value="50S ribosomal protein L16"/>
    <property type="match status" value="1"/>
</dbReference>
<dbReference type="Gene3D" id="3.90.1170.10">
    <property type="entry name" value="Ribosomal protein L10e/L16"/>
    <property type="match status" value="1"/>
</dbReference>
<dbReference type="HAMAP" id="MF_01342">
    <property type="entry name" value="Ribosomal_uL16"/>
    <property type="match status" value="1"/>
</dbReference>
<dbReference type="InterPro" id="IPR047873">
    <property type="entry name" value="Ribosomal_uL16"/>
</dbReference>
<dbReference type="InterPro" id="IPR000114">
    <property type="entry name" value="Ribosomal_uL16_bact-type"/>
</dbReference>
<dbReference type="InterPro" id="IPR020798">
    <property type="entry name" value="Ribosomal_uL16_CS"/>
</dbReference>
<dbReference type="InterPro" id="IPR016180">
    <property type="entry name" value="Ribosomal_uL16_dom"/>
</dbReference>
<dbReference type="InterPro" id="IPR036920">
    <property type="entry name" value="Ribosomal_uL16_sf"/>
</dbReference>
<dbReference type="NCBIfam" id="TIGR01164">
    <property type="entry name" value="rplP_bact"/>
    <property type="match status" value="1"/>
</dbReference>
<dbReference type="PANTHER" id="PTHR12220">
    <property type="entry name" value="50S/60S RIBOSOMAL PROTEIN L16"/>
    <property type="match status" value="1"/>
</dbReference>
<dbReference type="PANTHER" id="PTHR12220:SF13">
    <property type="entry name" value="LARGE RIBOSOMAL SUBUNIT PROTEIN UL16M"/>
    <property type="match status" value="1"/>
</dbReference>
<dbReference type="Pfam" id="PF00252">
    <property type="entry name" value="Ribosomal_L16"/>
    <property type="match status" value="1"/>
</dbReference>
<dbReference type="PRINTS" id="PR00060">
    <property type="entry name" value="RIBOSOMALL16"/>
</dbReference>
<dbReference type="SUPFAM" id="SSF54686">
    <property type="entry name" value="Ribosomal protein L16p/L10e"/>
    <property type="match status" value="1"/>
</dbReference>
<dbReference type="PROSITE" id="PS00586">
    <property type="entry name" value="RIBOSOMAL_L16_1"/>
    <property type="match status" value="1"/>
</dbReference>
<dbReference type="PROSITE" id="PS00701">
    <property type="entry name" value="RIBOSOMAL_L16_2"/>
    <property type="match status" value="1"/>
</dbReference>
<feature type="chain" id="PRO_0000062242" description="Large ribosomal subunit protein uL16">
    <location>
        <begin position="1"/>
        <end position="143"/>
    </location>
</feature>
<reference key="1">
    <citation type="journal article" date="2003" name="Genome Res.">
        <title>Tropheryma whipplei twist: a human pathogenic Actinobacteria with a reduced genome.</title>
        <authorList>
            <person name="Raoult D."/>
            <person name="Ogata H."/>
            <person name="Audic S."/>
            <person name="Robert C."/>
            <person name="Suhre K."/>
            <person name="Drancourt M."/>
            <person name="Claverie J.-M."/>
        </authorList>
    </citation>
    <scope>NUCLEOTIDE SEQUENCE [LARGE SCALE GENOMIC DNA]</scope>
    <source>
        <strain>Twist</strain>
    </source>
</reference>